<gene>
    <name type="primary">OR51L1</name>
</gene>
<dbReference type="EMBL" id="AB065799">
    <property type="protein sequence ID" value="BAC06018.1"/>
    <property type="molecule type" value="Genomic_DNA"/>
</dbReference>
<dbReference type="EMBL" id="CH471064">
    <property type="protein sequence ID" value="EAW68816.1"/>
    <property type="molecule type" value="Genomic_DNA"/>
</dbReference>
<dbReference type="EMBL" id="BK004317">
    <property type="protein sequence ID" value="DAA04715.1"/>
    <property type="molecule type" value="Genomic_DNA"/>
</dbReference>
<dbReference type="CCDS" id="CCDS31369.1"/>
<dbReference type="RefSeq" id="NP_001004755.1">
    <property type="nucleotide sequence ID" value="NM_001004755.2"/>
</dbReference>
<dbReference type="SMR" id="Q8NGJ5"/>
<dbReference type="BioGRID" id="125649">
    <property type="interactions" value="12"/>
</dbReference>
<dbReference type="FunCoup" id="Q8NGJ5">
    <property type="interactions" value="466"/>
</dbReference>
<dbReference type="STRING" id="9606.ENSP00000493015"/>
<dbReference type="GlyCosmos" id="Q8NGJ5">
    <property type="glycosylation" value="1 site, No reported glycans"/>
</dbReference>
<dbReference type="GlyGen" id="Q8NGJ5">
    <property type="glycosylation" value="1 site"/>
</dbReference>
<dbReference type="BioMuta" id="OR51L1"/>
<dbReference type="DMDM" id="38372707"/>
<dbReference type="PaxDb" id="9606-ENSP00000322156"/>
<dbReference type="ProteomicsDB" id="73531"/>
<dbReference type="Antibodypedia" id="65297">
    <property type="antibodies" value="64 antibodies from 17 providers"/>
</dbReference>
<dbReference type="DNASU" id="119682"/>
<dbReference type="Ensembl" id="ENST00000641819.1">
    <property type="protein sequence ID" value="ENSP00000493015.1"/>
    <property type="gene ID" value="ENSG00000176798.3"/>
</dbReference>
<dbReference type="GeneID" id="119682"/>
<dbReference type="KEGG" id="hsa:119682"/>
<dbReference type="MANE-Select" id="ENST00000641819.1">
    <property type="protein sequence ID" value="ENSP00000493015.1"/>
    <property type="RefSeq nucleotide sequence ID" value="NM_001004755.2"/>
    <property type="RefSeq protein sequence ID" value="NP_001004755.1"/>
</dbReference>
<dbReference type="UCSC" id="uc010qyu.2">
    <property type="organism name" value="human"/>
</dbReference>
<dbReference type="AGR" id="HGNC:14759"/>
<dbReference type="CTD" id="119682"/>
<dbReference type="GeneCards" id="OR51L1"/>
<dbReference type="HGNC" id="HGNC:14759">
    <property type="gene designation" value="OR51L1"/>
</dbReference>
<dbReference type="HPA" id="ENSG00000176798">
    <property type="expression patterns" value="Not detected"/>
</dbReference>
<dbReference type="neXtProt" id="NX_Q8NGJ5"/>
<dbReference type="OpenTargets" id="ENSG00000176798"/>
<dbReference type="PharmGKB" id="PA32384"/>
<dbReference type="VEuPathDB" id="HostDB:ENSG00000176798"/>
<dbReference type="eggNOG" id="ENOG502SI1B">
    <property type="taxonomic scope" value="Eukaryota"/>
</dbReference>
<dbReference type="GeneTree" id="ENSGT01130000278286"/>
<dbReference type="HOGENOM" id="CLU_012526_0_0_1"/>
<dbReference type="InParanoid" id="Q8NGJ5"/>
<dbReference type="OMA" id="SVIWIES"/>
<dbReference type="OrthoDB" id="6147321at2759"/>
<dbReference type="PAN-GO" id="Q8NGJ5">
    <property type="GO annotations" value="2 GO annotations based on evolutionary models"/>
</dbReference>
<dbReference type="PhylomeDB" id="Q8NGJ5"/>
<dbReference type="TreeFam" id="TF342735"/>
<dbReference type="PathwayCommons" id="Q8NGJ5"/>
<dbReference type="Reactome" id="R-HSA-381753">
    <property type="pathway name" value="Olfactory Signaling Pathway"/>
</dbReference>
<dbReference type="Reactome" id="R-HSA-9752946">
    <property type="pathway name" value="Expression and translocation of olfactory receptors"/>
</dbReference>
<dbReference type="BioGRID-ORCS" id="119682">
    <property type="hits" value="11 hits in 750 CRISPR screens"/>
</dbReference>
<dbReference type="GeneWiki" id="OR51L1"/>
<dbReference type="GenomeRNAi" id="119682"/>
<dbReference type="Pharos" id="Q8NGJ5">
    <property type="development level" value="Tdark"/>
</dbReference>
<dbReference type="PRO" id="PR:Q8NGJ5"/>
<dbReference type="Proteomes" id="UP000005640">
    <property type="component" value="Chromosome 11"/>
</dbReference>
<dbReference type="RNAct" id="Q8NGJ5">
    <property type="molecule type" value="protein"/>
</dbReference>
<dbReference type="Bgee" id="ENSG00000176798">
    <property type="expression patterns" value="Expressed in colonic epithelium and 1 other cell type or tissue"/>
</dbReference>
<dbReference type="ExpressionAtlas" id="Q8NGJ5">
    <property type="expression patterns" value="baseline and differential"/>
</dbReference>
<dbReference type="GO" id="GO:0005886">
    <property type="term" value="C:plasma membrane"/>
    <property type="evidence" value="ECO:0000318"/>
    <property type="project" value="GO_Central"/>
</dbReference>
<dbReference type="GO" id="GO:0004930">
    <property type="term" value="F:G protein-coupled receptor activity"/>
    <property type="evidence" value="ECO:0007669"/>
    <property type="project" value="UniProtKB-KW"/>
</dbReference>
<dbReference type="GO" id="GO:0004984">
    <property type="term" value="F:olfactory receptor activity"/>
    <property type="evidence" value="ECO:0000318"/>
    <property type="project" value="GO_Central"/>
</dbReference>
<dbReference type="CDD" id="cd15222">
    <property type="entry name" value="7tmA_OR51-like"/>
    <property type="match status" value="1"/>
</dbReference>
<dbReference type="FunFam" id="1.20.1070.10:FF:000002">
    <property type="entry name" value="Olfactory receptor"/>
    <property type="match status" value="1"/>
</dbReference>
<dbReference type="Gene3D" id="1.20.1070.10">
    <property type="entry name" value="Rhodopsin 7-helix transmembrane proteins"/>
    <property type="match status" value="1"/>
</dbReference>
<dbReference type="InterPro" id="IPR000276">
    <property type="entry name" value="GPCR_Rhodpsn"/>
</dbReference>
<dbReference type="InterPro" id="IPR017452">
    <property type="entry name" value="GPCR_Rhodpsn_7TM"/>
</dbReference>
<dbReference type="InterPro" id="IPR000725">
    <property type="entry name" value="Olfact_rcpt"/>
</dbReference>
<dbReference type="InterPro" id="IPR050402">
    <property type="entry name" value="OR51/52/56-like"/>
</dbReference>
<dbReference type="PANTHER" id="PTHR26450:SF37">
    <property type="entry name" value="OLFACTORY RECEPTOR 51L1"/>
    <property type="match status" value="1"/>
</dbReference>
<dbReference type="PANTHER" id="PTHR26450">
    <property type="entry name" value="OLFACTORY RECEPTOR 56B1-RELATED"/>
    <property type="match status" value="1"/>
</dbReference>
<dbReference type="Pfam" id="PF13853">
    <property type="entry name" value="7tm_4"/>
    <property type="match status" value="1"/>
</dbReference>
<dbReference type="PRINTS" id="PR00237">
    <property type="entry name" value="GPCRRHODOPSN"/>
</dbReference>
<dbReference type="PRINTS" id="PR00245">
    <property type="entry name" value="OLFACTORYR"/>
</dbReference>
<dbReference type="SUPFAM" id="SSF81321">
    <property type="entry name" value="Family A G protein-coupled receptor-like"/>
    <property type="match status" value="1"/>
</dbReference>
<dbReference type="PROSITE" id="PS00237">
    <property type="entry name" value="G_PROTEIN_RECEP_F1_1"/>
    <property type="match status" value="1"/>
</dbReference>
<dbReference type="PROSITE" id="PS50262">
    <property type="entry name" value="G_PROTEIN_RECEP_F1_2"/>
    <property type="match status" value="1"/>
</dbReference>
<organism>
    <name type="scientific">Homo sapiens</name>
    <name type="common">Human</name>
    <dbReference type="NCBI Taxonomy" id="9606"/>
    <lineage>
        <taxon>Eukaryota</taxon>
        <taxon>Metazoa</taxon>
        <taxon>Chordata</taxon>
        <taxon>Craniata</taxon>
        <taxon>Vertebrata</taxon>
        <taxon>Euteleostomi</taxon>
        <taxon>Mammalia</taxon>
        <taxon>Eutheria</taxon>
        <taxon>Euarchontoglires</taxon>
        <taxon>Primates</taxon>
        <taxon>Haplorrhini</taxon>
        <taxon>Catarrhini</taxon>
        <taxon>Hominidae</taxon>
        <taxon>Homo</taxon>
    </lineage>
</organism>
<sequence>MGDWNNSDAVEPIFILRGFPGLEYVHSWLSILFCLAYLVAFMGNVTILSVIWIESSLHQPMYYFISILAVNDLGMSLSTLPTMLAVLWLDAPEIQASACYAQLFFIHTFTFLESSVLLAMAFDRFVAICHPLHYPTILTNSVIGKIGLACLLRSLGVVLPTPLLLRHYHYCHGNALSHAFCLHQDVLRLSCTDARTNSIYGLCVVIATLGVDSIFILLSYVLILNTVLDIASREEQLKALNTCVSHICVVLIFFVPVIGVSMVHRFGKHLSPIVHILMADIYLLLPPVLNPIVYSVRTKQIRLGILHKFVLRRRF</sequence>
<protein>
    <recommendedName>
        <fullName>Olfactory receptor 51L1</fullName>
    </recommendedName>
    <alternativeName>
        <fullName>Olfactory receptor OR11-31</fullName>
    </alternativeName>
</protein>
<proteinExistence type="inferred from homology"/>
<feature type="chain" id="PRO_0000150759" description="Olfactory receptor 51L1">
    <location>
        <begin position="1"/>
        <end position="315"/>
    </location>
</feature>
<feature type="topological domain" description="Extracellular" evidence="1">
    <location>
        <begin position="1"/>
        <end position="27"/>
    </location>
</feature>
<feature type="transmembrane region" description="Helical; Name=1" evidence="1">
    <location>
        <begin position="28"/>
        <end position="48"/>
    </location>
</feature>
<feature type="topological domain" description="Cytoplasmic" evidence="1">
    <location>
        <begin position="49"/>
        <end position="56"/>
    </location>
</feature>
<feature type="transmembrane region" description="Helical; Name=2" evidence="1">
    <location>
        <begin position="57"/>
        <end position="77"/>
    </location>
</feature>
<feature type="topological domain" description="Extracellular" evidence="1">
    <location>
        <begin position="78"/>
        <end position="101"/>
    </location>
</feature>
<feature type="transmembrane region" description="Helical; Name=3" evidence="1">
    <location>
        <begin position="102"/>
        <end position="122"/>
    </location>
</feature>
<feature type="topological domain" description="Cytoplasmic" evidence="1">
    <location>
        <begin position="123"/>
        <end position="141"/>
    </location>
</feature>
<feature type="transmembrane region" description="Helical; Name=4" evidence="1">
    <location>
        <begin position="142"/>
        <end position="162"/>
    </location>
</feature>
<feature type="topological domain" description="Extracellular" evidence="1">
    <location>
        <begin position="163"/>
        <end position="198"/>
    </location>
</feature>
<feature type="transmembrane region" description="Helical; Name=5" evidence="1">
    <location>
        <begin position="199"/>
        <end position="219"/>
    </location>
</feature>
<feature type="topological domain" description="Cytoplasmic" evidence="1">
    <location>
        <begin position="220"/>
        <end position="239"/>
    </location>
</feature>
<feature type="transmembrane region" description="Helical; Name=6" evidence="1">
    <location>
        <begin position="240"/>
        <end position="260"/>
    </location>
</feature>
<feature type="topological domain" description="Extracellular" evidence="1">
    <location>
        <begin position="261"/>
        <end position="275"/>
    </location>
</feature>
<feature type="transmembrane region" description="Helical; Name=7" evidence="1">
    <location>
        <begin position="276"/>
        <end position="296"/>
    </location>
</feature>
<feature type="topological domain" description="Cytoplasmic" evidence="1">
    <location>
        <begin position="297"/>
        <end position="315"/>
    </location>
</feature>
<feature type="glycosylation site" description="N-linked (GlcNAc...) asparagine" evidence="1">
    <location>
        <position position="5"/>
    </location>
</feature>
<feature type="disulfide bond" evidence="2">
    <location>
        <begin position="99"/>
        <end position="191"/>
    </location>
</feature>
<feature type="sequence variant" id="VAR_034324" description="In dbSNP:rs10768448.">
    <original>T</original>
    <variation>I</variation>
    <location>
        <position position="196"/>
    </location>
</feature>
<feature type="sequence variant" id="VAR_034325" description="In dbSNP:rs10768450.">
    <original>A</original>
    <variation>V</variation>
    <location>
        <position position="207"/>
    </location>
</feature>
<comment type="function">
    <text evidence="3">Odorant receptor.</text>
</comment>
<comment type="subcellular location">
    <subcellularLocation>
        <location>Cell membrane</location>
        <topology>Multi-pass membrane protein</topology>
    </subcellularLocation>
</comment>
<comment type="similarity">
    <text evidence="2">Belongs to the G-protein coupled receptor 1 family.</text>
</comment>
<comment type="online information" name="Human Olfactory Receptor Data Exploratorium (HORDE)">
    <link uri="http://genome.weizmann.ac.il/horde/card/index/symbol:OR51L1"/>
</comment>
<reference key="1">
    <citation type="submission" date="2001-07" db="EMBL/GenBank/DDBJ databases">
        <title>Genome-wide discovery and analysis of human seven transmembrane helix receptor genes.</title>
        <authorList>
            <person name="Suwa M."/>
            <person name="Sato T."/>
            <person name="Okouchi I."/>
            <person name="Arita M."/>
            <person name="Futami K."/>
            <person name="Matsumoto S."/>
            <person name="Tsutsumi S."/>
            <person name="Aburatani H."/>
            <person name="Asai K."/>
            <person name="Akiyama Y."/>
        </authorList>
    </citation>
    <scope>NUCLEOTIDE SEQUENCE [GENOMIC DNA]</scope>
</reference>
<reference key="2">
    <citation type="submission" date="2005-09" db="EMBL/GenBank/DDBJ databases">
        <authorList>
            <person name="Mural R.J."/>
            <person name="Istrail S."/>
            <person name="Sutton G.G."/>
            <person name="Florea L."/>
            <person name="Halpern A.L."/>
            <person name="Mobarry C.M."/>
            <person name="Lippert R."/>
            <person name="Walenz B."/>
            <person name="Shatkay H."/>
            <person name="Dew I."/>
            <person name="Miller J.R."/>
            <person name="Flanigan M.J."/>
            <person name="Edwards N.J."/>
            <person name="Bolanos R."/>
            <person name="Fasulo D."/>
            <person name="Halldorsson B.V."/>
            <person name="Hannenhalli S."/>
            <person name="Turner R."/>
            <person name="Yooseph S."/>
            <person name="Lu F."/>
            <person name="Nusskern D.R."/>
            <person name="Shue B.C."/>
            <person name="Zheng X.H."/>
            <person name="Zhong F."/>
            <person name="Delcher A.L."/>
            <person name="Huson D.H."/>
            <person name="Kravitz S.A."/>
            <person name="Mouchard L."/>
            <person name="Reinert K."/>
            <person name="Remington K.A."/>
            <person name="Clark A.G."/>
            <person name="Waterman M.S."/>
            <person name="Eichler E.E."/>
            <person name="Adams M.D."/>
            <person name="Hunkapiller M.W."/>
            <person name="Myers E.W."/>
            <person name="Venter J.C."/>
        </authorList>
    </citation>
    <scope>NUCLEOTIDE SEQUENCE [LARGE SCALE GENOMIC DNA]</scope>
</reference>
<reference key="3">
    <citation type="journal article" date="2004" name="Proc. Natl. Acad. Sci. U.S.A.">
        <title>The human olfactory receptor gene family.</title>
        <authorList>
            <person name="Malnic B."/>
            <person name="Godfrey P.A."/>
            <person name="Buck L.B."/>
        </authorList>
    </citation>
    <scope>IDENTIFICATION</scope>
</reference>
<reference key="4">
    <citation type="journal article" date="2004" name="Proc. Natl. Acad. Sci. U.S.A.">
        <authorList>
            <person name="Malnic B."/>
            <person name="Godfrey P.A."/>
            <person name="Buck L.B."/>
        </authorList>
    </citation>
    <scope>ERRATUM OF PUBMED:14983052</scope>
</reference>
<name>O51L1_HUMAN</name>
<keyword id="KW-1003">Cell membrane</keyword>
<keyword id="KW-1015">Disulfide bond</keyword>
<keyword id="KW-0297">G-protein coupled receptor</keyword>
<keyword id="KW-0325">Glycoprotein</keyword>
<keyword id="KW-0472">Membrane</keyword>
<keyword id="KW-0552">Olfaction</keyword>
<keyword id="KW-0675">Receptor</keyword>
<keyword id="KW-1185">Reference proteome</keyword>
<keyword id="KW-0716">Sensory transduction</keyword>
<keyword id="KW-0807">Transducer</keyword>
<keyword id="KW-0812">Transmembrane</keyword>
<keyword id="KW-1133">Transmembrane helix</keyword>
<evidence type="ECO:0000255" key="1"/>
<evidence type="ECO:0000255" key="2">
    <source>
        <dbReference type="PROSITE-ProRule" id="PRU00521"/>
    </source>
</evidence>
<evidence type="ECO:0000305" key="3"/>
<accession>Q8NGJ5</accession>
<accession>Q6IFE5</accession>